<feature type="chain" id="PRO_0000121607" description="tRNA-specific 2-thiouridylase MnmA">
    <location>
        <begin position="1"/>
        <end position="371"/>
    </location>
</feature>
<feature type="region of interest" description="Interaction with target base in tRNA" evidence="1">
    <location>
        <begin position="99"/>
        <end position="101"/>
    </location>
</feature>
<feature type="region of interest" description="Interaction with tRNA" evidence="1">
    <location>
        <begin position="150"/>
        <end position="152"/>
    </location>
</feature>
<feature type="region of interest" description="Interaction with tRNA" evidence="1">
    <location>
        <begin position="308"/>
        <end position="309"/>
    </location>
</feature>
<feature type="active site" description="Nucleophile" evidence="1">
    <location>
        <position position="104"/>
    </location>
</feature>
<feature type="active site" description="Cysteine persulfide intermediate" evidence="1">
    <location>
        <position position="200"/>
    </location>
</feature>
<feature type="binding site" evidence="1">
    <location>
        <begin position="13"/>
        <end position="20"/>
    </location>
    <ligand>
        <name>ATP</name>
        <dbReference type="ChEBI" id="CHEBI:30616"/>
    </ligand>
</feature>
<feature type="binding site" evidence="1">
    <location>
        <position position="39"/>
    </location>
    <ligand>
        <name>ATP</name>
        <dbReference type="ChEBI" id="CHEBI:30616"/>
    </ligand>
</feature>
<feature type="binding site" evidence="1">
    <location>
        <position position="128"/>
    </location>
    <ligand>
        <name>ATP</name>
        <dbReference type="ChEBI" id="CHEBI:30616"/>
    </ligand>
</feature>
<feature type="site" description="Interaction with tRNA" evidence="1">
    <location>
        <position position="129"/>
    </location>
</feature>
<feature type="site" description="Interaction with tRNA" evidence="1">
    <location>
        <position position="341"/>
    </location>
</feature>
<feature type="disulfide bond" description="Alternate" evidence="1">
    <location>
        <begin position="104"/>
        <end position="200"/>
    </location>
</feature>
<organism>
    <name type="scientific">Bacillus thuringiensis subsp. konkukian (strain 97-27)</name>
    <dbReference type="NCBI Taxonomy" id="281309"/>
    <lineage>
        <taxon>Bacteria</taxon>
        <taxon>Bacillati</taxon>
        <taxon>Bacillota</taxon>
        <taxon>Bacilli</taxon>
        <taxon>Bacillales</taxon>
        <taxon>Bacillaceae</taxon>
        <taxon>Bacillus</taxon>
        <taxon>Bacillus cereus group</taxon>
    </lineage>
</organism>
<evidence type="ECO:0000255" key="1">
    <source>
        <dbReference type="HAMAP-Rule" id="MF_00144"/>
    </source>
</evidence>
<dbReference type="EC" id="2.8.1.13" evidence="1"/>
<dbReference type="EMBL" id="AE017355">
    <property type="protein sequence ID" value="AAT63680.1"/>
    <property type="molecule type" value="Genomic_DNA"/>
</dbReference>
<dbReference type="RefSeq" id="WP_001038006.1">
    <property type="nucleotide sequence ID" value="NC_005957.1"/>
</dbReference>
<dbReference type="RefSeq" id="YP_038446.1">
    <property type="nucleotide sequence ID" value="NC_005957.1"/>
</dbReference>
<dbReference type="SMR" id="Q6HDD0"/>
<dbReference type="GeneID" id="93006705"/>
<dbReference type="KEGG" id="btk:BT9727_4128"/>
<dbReference type="PATRIC" id="fig|281309.8.peg.4406"/>
<dbReference type="HOGENOM" id="CLU_035188_1_0_9"/>
<dbReference type="Proteomes" id="UP000001301">
    <property type="component" value="Chromosome"/>
</dbReference>
<dbReference type="GO" id="GO:0005737">
    <property type="term" value="C:cytoplasm"/>
    <property type="evidence" value="ECO:0007669"/>
    <property type="project" value="UniProtKB-SubCell"/>
</dbReference>
<dbReference type="GO" id="GO:0005524">
    <property type="term" value="F:ATP binding"/>
    <property type="evidence" value="ECO:0007669"/>
    <property type="project" value="UniProtKB-KW"/>
</dbReference>
<dbReference type="GO" id="GO:0000049">
    <property type="term" value="F:tRNA binding"/>
    <property type="evidence" value="ECO:0007669"/>
    <property type="project" value="UniProtKB-KW"/>
</dbReference>
<dbReference type="GO" id="GO:0103016">
    <property type="term" value="F:tRNA-uridine 2-sulfurtransferase activity"/>
    <property type="evidence" value="ECO:0007669"/>
    <property type="project" value="UniProtKB-EC"/>
</dbReference>
<dbReference type="GO" id="GO:0002143">
    <property type="term" value="P:tRNA wobble position uridine thiolation"/>
    <property type="evidence" value="ECO:0007669"/>
    <property type="project" value="TreeGrafter"/>
</dbReference>
<dbReference type="CDD" id="cd01998">
    <property type="entry name" value="MnmA_TRMU-like"/>
    <property type="match status" value="1"/>
</dbReference>
<dbReference type="FunFam" id="2.30.30.280:FF:000001">
    <property type="entry name" value="tRNA-specific 2-thiouridylase MnmA"/>
    <property type="match status" value="1"/>
</dbReference>
<dbReference type="FunFam" id="2.40.30.10:FF:000023">
    <property type="entry name" value="tRNA-specific 2-thiouridylase MnmA"/>
    <property type="match status" value="1"/>
</dbReference>
<dbReference type="FunFam" id="3.40.50.620:FF:000004">
    <property type="entry name" value="tRNA-specific 2-thiouridylase MnmA"/>
    <property type="match status" value="1"/>
</dbReference>
<dbReference type="Gene3D" id="2.30.30.280">
    <property type="entry name" value="Adenine nucleotide alpha hydrolases-like domains"/>
    <property type="match status" value="1"/>
</dbReference>
<dbReference type="Gene3D" id="3.40.50.620">
    <property type="entry name" value="HUPs"/>
    <property type="match status" value="1"/>
</dbReference>
<dbReference type="Gene3D" id="2.40.30.10">
    <property type="entry name" value="Translation factors"/>
    <property type="match status" value="1"/>
</dbReference>
<dbReference type="HAMAP" id="MF_00144">
    <property type="entry name" value="tRNA_thiouridyl_MnmA"/>
    <property type="match status" value="1"/>
</dbReference>
<dbReference type="InterPro" id="IPR004506">
    <property type="entry name" value="MnmA-like"/>
</dbReference>
<dbReference type="InterPro" id="IPR046885">
    <property type="entry name" value="MnmA-like_C"/>
</dbReference>
<dbReference type="InterPro" id="IPR046884">
    <property type="entry name" value="MnmA-like_central"/>
</dbReference>
<dbReference type="InterPro" id="IPR023382">
    <property type="entry name" value="MnmA-like_central_sf"/>
</dbReference>
<dbReference type="InterPro" id="IPR014729">
    <property type="entry name" value="Rossmann-like_a/b/a_fold"/>
</dbReference>
<dbReference type="NCBIfam" id="NF001138">
    <property type="entry name" value="PRK00143.1"/>
    <property type="match status" value="1"/>
</dbReference>
<dbReference type="NCBIfam" id="TIGR00420">
    <property type="entry name" value="trmU"/>
    <property type="match status" value="1"/>
</dbReference>
<dbReference type="PANTHER" id="PTHR11933:SF5">
    <property type="entry name" value="MITOCHONDRIAL TRNA-SPECIFIC 2-THIOURIDYLASE 1"/>
    <property type="match status" value="1"/>
</dbReference>
<dbReference type="PANTHER" id="PTHR11933">
    <property type="entry name" value="TRNA 5-METHYLAMINOMETHYL-2-THIOURIDYLATE -METHYLTRANSFERASE"/>
    <property type="match status" value="1"/>
</dbReference>
<dbReference type="Pfam" id="PF03054">
    <property type="entry name" value="tRNA_Me_trans"/>
    <property type="match status" value="1"/>
</dbReference>
<dbReference type="Pfam" id="PF20258">
    <property type="entry name" value="tRNA_Me_trans_C"/>
    <property type="match status" value="1"/>
</dbReference>
<dbReference type="Pfam" id="PF20259">
    <property type="entry name" value="tRNA_Me_trans_M"/>
    <property type="match status" value="1"/>
</dbReference>
<dbReference type="SUPFAM" id="SSF52402">
    <property type="entry name" value="Adenine nucleotide alpha hydrolases-like"/>
    <property type="match status" value="1"/>
</dbReference>
<protein>
    <recommendedName>
        <fullName evidence="1">tRNA-specific 2-thiouridylase MnmA</fullName>
        <ecNumber evidence="1">2.8.1.13</ecNumber>
    </recommendedName>
</protein>
<name>MNMA_BACHK</name>
<gene>
    <name evidence="1" type="primary">mnmA</name>
    <name type="synonym">trmU</name>
    <name type="ordered locus">BT9727_4128</name>
</gene>
<keyword id="KW-0067">ATP-binding</keyword>
<keyword id="KW-0963">Cytoplasm</keyword>
<keyword id="KW-1015">Disulfide bond</keyword>
<keyword id="KW-0547">Nucleotide-binding</keyword>
<keyword id="KW-0694">RNA-binding</keyword>
<keyword id="KW-0808">Transferase</keyword>
<keyword id="KW-0819">tRNA processing</keyword>
<keyword id="KW-0820">tRNA-binding</keyword>
<comment type="function">
    <text evidence="1">Catalyzes the 2-thiolation of uridine at the wobble position (U34) of tRNA, leading to the formation of s(2)U34.</text>
</comment>
<comment type="catalytic activity">
    <reaction evidence="1">
        <text>S-sulfanyl-L-cysteinyl-[protein] + uridine(34) in tRNA + AH2 + ATP = 2-thiouridine(34) in tRNA + L-cysteinyl-[protein] + A + AMP + diphosphate + H(+)</text>
        <dbReference type="Rhea" id="RHEA:47032"/>
        <dbReference type="Rhea" id="RHEA-COMP:10131"/>
        <dbReference type="Rhea" id="RHEA-COMP:11726"/>
        <dbReference type="Rhea" id="RHEA-COMP:11727"/>
        <dbReference type="Rhea" id="RHEA-COMP:11728"/>
        <dbReference type="ChEBI" id="CHEBI:13193"/>
        <dbReference type="ChEBI" id="CHEBI:15378"/>
        <dbReference type="ChEBI" id="CHEBI:17499"/>
        <dbReference type="ChEBI" id="CHEBI:29950"/>
        <dbReference type="ChEBI" id="CHEBI:30616"/>
        <dbReference type="ChEBI" id="CHEBI:33019"/>
        <dbReference type="ChEBI" id="CHEBI:61963"/>
        <dbReference type="ChEBI" id="CHEBI:65315"/>
        <dbReference type="ChEBI" id="CHEBI:87170"/>
        <dbReference type="ChEBI" id="CHEBI:456215"/>
        <dbReference type="EC" id="2.8.1.13"/>
    </reaction>
</comment>
<comment type="subcellular location">
    <subcellularLocation>
        <location evidence="1">Cytoplasm</location>
    </subcellularLocation>
</comment>
<comment type="similarity">
    <text evidence="1">Belongs to the MnmA/TRMU family.</text>
</comment>
<accession>Q6HDD0</accession>
<sequence>MNKLPHETRVVIGMSGGVDSSVAALLLKEQGYDVIGIFMKNWDDTDENGVCTATEDYNDVIEVCNQIGIPYYAVNFEKQYWDKVFTYFLDEYRAGRTPNPDVMCNKEIKFKAFLEHAIALGADYVATGHYARVAYMDGEYKMLRGVDDNKDQTYFLNQLSQEQLSKTMFPLGELKKPQIREMAKEAGLATAAKKDSTGICFIGERNFKDFLSNYLPAQPGVMQTLSGEVKGKHDGLMYYTIGQRHGLGIGGNGDPWFAVGKNLKENILYVDQGFHNELLYGDEVIATNVGWVSNEAKEKEFKCTAKFRYRQEDNKVTVQIVDENTVRILCDEPIRAITPGQAVVFYDGDECLGGATIDEVYRSGKKLDYLG</sequence>
<proteinExistence type="inferred from homology"/>
<reference key="1">
    <citation type="journal article" date="2006" name="J. Bacteriol.">
        <title>Pathogenomic sequence analysis of Bacillus cereus and Bacillus thuringiensis isolates closely related to Bacillus anthracis.</title>
        <authorList>
            <person name="Han C.S."/>
            <person name="Xie G."/>
            <person name="Challacombe J.F."/>
            <person name="Altherr M.R."/>
            <person name="Bhotika S.S."/>
            <person name="Bruce D."/>
            <person name="Campbell C.S."/>
            <person name="Campbell M.L."/>
            <person name="Chen J."/>
            <person name="Chertkov O."/>
            <person name="Cleland C."/>
            <person name="Dimitrijevic M."/>
            <person name="Doggett N.A."/>
            <person name="Fawcett J.J."/>
            <person name="Glavina T."/>
            <person name="Goodwin L.A."/>
            <person name="Hill K.K."/>
            <person name="Hitchcock P."/>
            <person name="Jackson P.J."/>
            <person name="Keim P."/>
            <person name="Kewalramani A.R."/>
            <person name="Longmire J."/>
            <person name="Lucas S."/>
            <person name="Malfatti S."/>
            <person name="McMurry K."/>
            <person name="Meincke L.J."/>
            <person name="Misra M."/>
            <person name="Moseman B.L."/>
            <person name="Mundt M."/>
            <person name="Munk A.C."/>
            <person name="Okinaka R.T."/>
            <person name="Parson-Quintana B."/>
            <person name="Reilly L.P."/>
            <person name="Richardson P."/>
            <person name="Robinson D.L."/>
            <person name="Rubin E."/>
            <person name="Saunders E."/>
            <person name="Tapia R."/>
            <person name="Tesmer J.G."/>
            <person name="Thayer N."/>
            <person name="Thompson L.S."/>
            <person name="Tice H."/>
            <person name="Ticknor L.O."/>
            <person name="Wills P.L."/>
            <person name="Brettin T.S."/>
            <person name="Gilna P."/>
        </authorList>
    </citation>
    <scope>NUCLEOTIDE SEQUENCE [LARGE SCALE GENOMIC DNA]</scope>
    <source>
        <strain>97-27</strain>
    </source>
</reference>